<feature type="chain" id="PRO_1000129533" description="UDP-2,3-diacylglucosamine hydrolase">
    <location>
        <begin position="1"/>
        <end position="240"/>
    </location>
</feature>
<feature type="binding site" evidence="1">
    <location>
        <position position="8"/>
    </location>
    <ligand>
        <name>Mn(2+)</name>
        <dbReference type="ChEBI" id="CHEBI:29035"/>
        <label>1</label>
    </ligand>
</feature>
<feature type="binding site" evidence="1">
    <location>
        <position position="10"/>
    </location>
    <ligand>
        <name>Mn(2+)</name>
        <dbReference type="ChEBI" id="CHEBI:29035"/>
        <label>1</label>
    </ligand>
</feature>
<feature type="binding site" evidence="1">
    <location>
        <position position="41"/>
    </location>
    <ligand>
        <name>Mn(2+)</name>
        <dbReference type="ChEBI" id="CHEBI:29035"/>
        <label>1</label>
    </ligand>
</feature>
<feature type="binding site" evidence="1">
    <location>
        <position position="41"/>
    </location>
    <ligand>
        <name>Mn(2+)</name>
        <dbReference type="ChEBI" id="CHEBI:29035"/>
        <label>2</label>
    </ligand>
</feature>
<feature type="binding site" evidence="1">
    <location>
        <begin position="79"/>
        <end position="80"/>
    </location>
    <ligand>
        <name>substrate</name>
    </ligand>
</feature>
<feature type="binding site" evidence="1">
    <location>
        <position position="79"/>
    </location>
    <ligand>
        <name>Mn(2+)</name>
        <dbReference type="ChEBI" id="CHEBI:29035"/>
        <label>2</label>
    </ligand>
</feature>
<feature type="binding site" evidence="1">
    <location>
        <position position="114"/>
    </location>
    <ligand>
        <name>Mn(2+)</name>
        <dbReference type="ChEBI" id="CHEBI:29035"/>
        <label>2</label>
    </ligand>
</feature>
<feature type="binding site" evidence="1">
    <location>
        <position position="122"/>
    </location>
    <ligand>
        <name>substrate</name>
    </ligand>
</feature>
<feature type="binding site" evidence="1">
    <location>
        <position position="160"/>
    </location>
    <ligand>
        <name>substrate</name>
    </ligand>
</feature>
<feature type="binding site" evidence="1">
    <location>
        <position position="164"/>
    </location>
    <ligand>
        <name>substrate</name>
    </ligand>
</feature>
<feature type="binding site" evidence="1">
    <location>
        <position position="167"/>
    </location>
    <ligand>
        <name>substrate</name>
    </ligand>
</feature>
<feature type="binding site" evidence="1">
    <location>
        <position position="195"/>
    </location>
    <ligand>
        <name>Mn(2+)</name>
        <dbReference type="ChEBI" id="CHEBI:29035"/>
        <label>2</label>
    </ligand>
</feature>
<feature type="binding site" evidence="1">
    <location>
        <position position="195"/>
    </location>
    <ligand>
        <name>substrate</name>
    </ligand>
</feature>
<feature type="binding site" evidence="1">
    <location>
        <position position="197"/>
    </location>
    <ligand>
        <name>Mn(2+)</name>
        <dbReference type="ChEBI" id="CHEBI:29035"/>
        <label>1</label>
    </ligand>
</feature>
<dbReference type="EC" id="3.6.1.54" evidence="1"/>
<dbReference type="EMBL" id="AM933173">
    <property type="protein sequence ID" value="CAR36443.1"/>
    <property type="molecule type" value="Genomic_DNA"/>
</dbReference>
<dbReference type="RefSeq" id="WP_000212289.1">
    <property type="nucleotide sequence ID" value="NC_011274.1"/>
</dbReference>
<dbReference type="SMR" id="B5R6W8"/>
<dbReference type="KEGG" id="seg:SG0547"/>
<dbReference type="HOGENOM" id="CLU_074586_0_0_6"/>
<dbReference type="UniPathway" id="UPA00359">
    <property type="reaction ID" value="UER00480"/>
</dbReference>
<dbReference type="Proteomes" id="UP000008321">
    <property type="component" value="Chromosome"/>
</dbReference>
<dbReference type="GO" id="GO:0005737">
    <property type="term" value="C:cytoplasm"/>
    <property type="evidence" value="ECO:0007669"/>
    <property type="project" value="InterPro"/>
</dbReference>
<dbReference type="GO" id="GO:0019897">
    <property type="term" value="C:extrinsic component of plasma membrane"/>
    <property type="evidence" value="ECO:0007669"/>
    <property type="project" value="UniProtKB-UniRule"/>
</dbReference>
<dbReference type="GO" id="GO:0030145">
    <property type="term" value="F:manganese ion binding"/>
    <property type="evidence" value="ECO:0007669"/>
    <property type="project" value="UniProtKB-UniRule"/>
</dbReference>
<dbReference type="GO" id="GO:0008758">
    <property type="term" value="F:UDP-2,3-diacylglucosamine hydrolase activity"/>
    <property type="evidence" value="ECO:0007669"/>
    <property type="project" value="UniProtKB-UniRule"/>
</dbReference>
<dbReference type="GO" id="GO:0009245">
    <property type="term" value="P:lipid A biosynthetic process"/>
    <property type="evidence" value="ECO:0007669"/>
    <property type="project" value="UniProtKB-UniRule"/>
</dbReference>
<dbReference type="CDD" id="cd07398">
    <property type="entry name" value="MPP_YbbF-LpxH"/>
    <property type="match status" value="1"/>
</dbReference>
<dbReference type="FunFam" id="3.60.21.10:FF:000012">
    <property type="entry name" value="UDP-2,3-diacylglucosamine hydrolase"/>
    <property type="match status" value="1"/>
</dbReference>
<dbReference type="Gene3D" id="3.60.21.10">
    <property type="match status" value="1"/>
</dbReference>
<dbReference type="HAMAP" id="MF_00575">
    <property type="entry name" value="LpxH"/>
    <property type="match status" value="1"/>
</dbReference>
<dbReference type="InterPro" id="IPR004843">
    <property type="entry name" value="Calcineurin-like_PHP_ApaH"/>
</dbReference>
<dbReference type="InterPro" id="IPR043461">
    <property type="entry name" value="LpxH-like"/>
</dbReference>
<dbReference type="InterPro" id="IPR029052">
    <property type="entry name" value="Metallo-depent_PP-like"/>
</dbReference>
<dbReference type="InterPro" id="IPR010138">
    <property type="entry name" value="UDP-diacylglucosamine_Hdrlase"/>
</dbReference>
<dbReference type="NCBIfam" id="TIGR01854">
    <property type="entry name" value="lipid_A_lpxH"/>
    <property type="match status" value="1"/>
</dbReference>
<dbReference type="NCBIfam" id="NF003743">
    <property type="entry name" value="PRK05340.1"/>
    <property type="match status" value="1"/>
</dbReference>
<dbReference type="PANTHER" id="PTHR34990:SF1">
    <property type="entry name" value="UDP-2,3-DIACYLGLUCOSAMINE HYDROLASE"/>
    <property type="match status" value="1"/>
</dbReference>
<dbReference type="PANTHER" id="PTHR34990">
    <property type="entry name" value="UDP-2,3-DIACYLGLUCOSAMINE HYDROLASE-RELATED"/>
    <property type="match status" value="1"/>
</dbReference>
<dbReference type="Pfam" id="PF00149">
    <property type="entry name" value="Metallophos"/>
    <property type="match status" value="1"/>
</dbReference>
<dbReference type="SUPFAM" id="SSF56300">
    <property type="entry name" value="Metallo-dependent phosphatases"/>
    <property type="match status" value="1"/>
</dbReference>
<keyword id="KW-0997">Cell inner membrane</keyword>
<keyword id="KW-1003">Cell membrane</keyword>
<keyword id="KW-0378">Hydrolase</keyword>
<keyword id="KW-0441">Lipid A biosynthesis</keyword>
<keyword id="KW-0444">Lipid biosynthesis</keyword>
<keyword id="KW-0443">Lipid metabolism</keyword>
<keyword id="KW-0464">Manganese</keyword>
<keyword id="KW-0472">Membrane</keyword>
<keyword id="KW-0479">Metal-binding</keyword>
<evidence type="ECO:0000255" key="1">
    <source>
        <dbReference type="HAMAP-Rule" id="MF_00575"/>
    </source>
</evidence>
<gene>
    <name evidence="1" type="primary">lpxH</name>
    <name type="ordered locus">SG0547</name>
</gene>
<accession>B5R6W8</accession>
<organism>
    <name type="scientific">Salmonella gallinarum (strain 287/91 / NCTC 13346)</name>
    <dbReference type="NCBI Taxonomy" id="550538"/>
    <lineage>
        <taxon>Bacteria</taxon>
        <taxon>Pseudomonadati</taxon>
        <taxon>Pseudomonadota</taxon>
        <taxon>Gammaproteobacteria</taxon>
        <taxon>Enterobacterales</taxon>
        <taxon>Enterobacteriaceae</taxon>
        <taxon>Salmonella</taxon>
    </lineage>
</organism>
<name>LPXH_SALG2</name>
<comment type="function">
    <text evidence="1">Hydrolyzes the pyrophosphate bond of UDP-2,3-diacylglucosamine to yield 2,3-diacylglucosamine 1-phosphate (lipid X) and UMP by catalyzing the attack of water at the alpha-P atom. Involved in the biosynthesis of lipid A, a phosphorylated glycolipid that anchors the lipopolysaccharide to the outer membrane of the cell.</text>
</comment>
<comment type="catalytic activity">
    <reaction evidence="1">
        <text>UDP-2-N,3-O-bis[(3R)-3-hydroxytetradecanoyl]-alpha-D-glucosamine + H2O = 2-N,3-O-bis[(3R)-3-hydroxytetradecanoyl]-alpha-D-glucosaminyl 1-phosphate + UMP + 2 H(+)</text>
        <dbReference type="Rhea" id="RHEA:25213"/>
        <dbReference type="ChEBI" id="CHEBI:15377"/>
        <dbReference type="ChEBI" id="CHEBI:15378"/>
        <dbReference type="ChEBI" id="CHEBI:57865"/>
        <dbReference type="ChEBI" id="CHEBI:57957"/>
        <dbReference type="ChEBI" id="CHEBI:78847"/>
        <dbReference type="EC" id="3.6.1.54"/>
    </reaction>
</comment>
<comment type="cofactor">
    <cofactor evidence="1">
        <name>Mn(2+)</name>
        <dbReference type="ChEBI" id="CHEBI:29035"/>
    </cofactor>
    <text evidence="1">Binds 2 Mn(2+) ions per subunit in a binuclear metal center.</text>
</comment>
<comment type="pathway">
    <text evidence="1">Glycolipid biosynthesis; lipid IV(A) biosynthesis; lipid IV(A) from (3R)-3-hydroxytetradecanoyl-[acyl-carrier-protein] and UDP-N-acetyl-alpha-D-glucosamine: step 4/6.</text>
</comment>
<comment type="subcellular location">
    <subcellularLocation>
        <location evidence="1">Cell inner membrane</location>
        <topology evidence="1">Peripheral membrane protein</topology>
        <orientation evidence="1">Cytoplasmic side</orientation>
    </subcellularLocation>
</comment>
<comment type="similarity">
    <text evidence="1">Belongs to the LpxH family.</text>
</comment>
<protein>
    <recommendedName>
        <fullName evidence="1">UDP-2,3-diacylglucosamine hydrolase</fullName>
        <ecNumber evidence="1">3.6.1.54</ecNumber>
    </recommendedName>
    <alternativeName>
        <fullName evidence="1">UDP-2,3-diacylglucosamine diphosphatase</fullName>
    </alternativeName>
</protein>
<proteinExistence type="inferred from homology"/>
<reference key="1">
    <citation type="journal article" date="2008" name="Genome Res.">
        <title>Comparative genome analysis of Salmonella enteritidis PT4 and Salmonella gallinarum 287/91 provides insights into evolutionary and host adaptation pathways.</title>
        <authorList>
            <person name="Thomson N.R."/>
            <person name="Clayton D.J."/>
            <person name="Windhorst D."/>
            <person name="Vernikos G."/>
            <person name="Davidson S."/>
            <person name="Churcher C."/>
            <person name="Quail M.A."/>
            <person name="Stevens M."/>
            <person name="Jones M.A."/>
            <person name="Watson M."/>
            <person name="Barron A."/>
            <person name="Layton A."/>
            <person name="Pickard D."/>
            <person name="Kingsley R.A."/>
            <person name="Bignell A."/>
            <person name="Clark L."/>
            <person name="Harris B."/>
            <person name="Ormond D."/>
            <person name="Abdellah Z."/>
            <person name="Brooks K."/>
            <person name="Cherevach I."/>
            <person name="Chillingworth T."/>
            <person name="Woodward J."/>
            <person name="Norberczak H."/>
            <person name="Lord A."/>
            <person name="Arrowsmith C."/>
            <person name="Jagels K."/>
            <person name="Moule S."/>
            <person name="Mungall K."/>
            <person name="Saunders M."/>
            <person name="Whitehead S."/>
            <person name="Chabalgoity J.A."/>
            <person name="Maskell D."/>
            <person name="Humphreys T."/>
            <person name="Roberts M."/>
            <person name="Barrow P.A."/>
            <person name="Dougan G."/>
            <person name="Parkhill J."/>
        </authorList>
    </citation>
    <scope>NUCLEOTIDE SEQUENCE [LARGE SCALE GENOMIC DNA]</scope>
    <source>
        <strain>287/91 / NCTC 13346</strain>
    </source>
</reference>
<sequence>MATLFIADLHLQTEEPAIVAGFLRFLAVEARQADALYILGDLFEAWIGDDDPNPLHREMAVAIKSLVDSGVPCFFIHGNRDFLIGKRFARESGMTLLPQEKVLDLYGRNVLIMHGDTLCTDDAGYQAFRAKVHNPWVQRLFLTLPLFIRRRIAARMRAGSKAANSSKSLDIMDVNAQTVVAEMEKHRVQWLIHGHTHRPAVHELSANDQPAFRVVLGAWHHEGSMVKVTPDNVELIAFPL</sequence>